<evidence type="ECO:0000255" key="1">
    <source>
        <dbReference type="HAMAP-Rule" id="MF_00429"/>
    </source>
</evidence>
<feature type="chain" id="PRO_1000080571" description="Na(+)-translocating NADH-quinone reductase subunit E">
    <location>
        <begin position="1"/>
        <end position="197"/>
    </location>
</feature>
<feature type="transmembrane region" description="Helical" evidence="1">
    <location>
        <begin position="11"/>
        <end position="31"/>
    </location>
</feature>
<feature type="transmembrane region" description="Helical" evidence="1">
    <location>
        <begin position="35"/>
        <end position="55"/>
    </location>
</feature>
<feature type="transmembrane region" description="Helical" evidence="1">
    <location>
        <begin position="76"/>
        <end position="96"/>
    </location>
</feature>
<feature type="transmembrane region" description="Helical" evidence="1">
    <location>
        <begin position="108"/>
        <end position="128"/>
    </location>
</feature>
<feature type="transmembrane region" description="Helical" evidence="1">
    <location>
        <begin position="139"/>
        <end position="159"/>
    </location>
</feature>
<feature type="transmembrane region" description="Helical" evidence="1">
    <location>
        <begin position="175"/>
        <end position="195"/>
    </location>
</feature>
<name>NQRE_NEIM0</name>
<proteinExistence type="inferred from homology"/>
<sequence>MEHYLSLFIKSVFIENMALSFFLGMCTFLAVSKKVSTAFGLGVAVIFVLGLSVPVNQLVYSLLKDGAIVEGVDLTFLKFITFIGVIAALVQILEMFLDKFVPALYNALGIYLPLITVNCAIFGAVSFMAQREYNFGESVVYGFGAGLGWMLAIVALAGITEKMKYSDAPKGLKGLGITFIAAGLMAMAFMSFSGIQL</sequence>
<accession>A9M2A7</accession>
<gene>
    <name evidence="1" type="primary">nqrE</name>
    <name type="ordered locus">NMCC_0511</name>
</gene>
<protein>
    <recommendedName>
        <fullName evidence="1">Na(+)-translocating NADH-quinone reductase subunit E</fullName>
        <shortName evidence="1">Na(+)-NQR subunit E</shortName>
        <shortName evidence="1">Na(+)-translocating NQR subunit E</shortName>
        <ecNumber evidence="1">7.2.1.1</ecNumber>
    </recommendedName>
    <alternativeName>
        <fullName evidence="1">NQR complex subunit E</fullName>
    </alternativeName>
    <alternativeName>
        <fullName evidence="1">NQR-1 subunit E</fullName>
    </alternativeName>
</protein>
<reference key="1">
    <citation type="journal article" date="2008" name="Genomics">
        <title>Characterization of ST-4821 complex, a unique Neisseria meningitidis clone.</title>
        <authorList>
            <person name="Peng J."/>
            <person name="Yang L."/>
            <person name="Yang F."/>
            <person name="Yang J."/>
            <person name="Yan Y."/>
            <person name="Nie H."/>
            <person name="Zhang X."/>
            <person name="Xiong Z."/>
            <person name="Jiang Y."/>
            <person name="Cheng F."/>
            <person name="Xu X."/>
            <person name="Chen S."/>
            <person name="Sun L."/>
            <person name="Li W."/>
            <person name="Shen Y."/>
            <person name="Shao Z."/>
            <person name="Liang X."/>
            <person name="Xu J."/>
            <person name="Jin Q."/>
        </authorList>
    </citation>
    <scope>NUCLEOTIDE SEQUENCE [LARGE SCALE GENOMIC DNA]</scope>
    <source>
        <strain>053442</strain>
    </source>
</reference>
<keyword id="KW-0997">Cell inner membrane</keyword>
<keyword id="KW-1003">Cell membrane</keyword>
<keyword id="KW-0406">Ion transport</keyword>
<keyword id="KW-0472">Membrane</keyword>
<keyword id="KW-0520">NAD</keyword>
<keyword id="KW-0915">Sodium</keyword>
<keyword id="KW-0739">Sodium transport</keyword>
<keyword id="KW-1278">Translocase</keyword>
<keyword id="KW-0812">Transmembrane</keyword>
<keyword id="KW-1133">Transmembrane helix</keyword>
<keyword id="KW-0813">Transport</keyword>
<keyword id="KW-0830">Ubiquinone</keyword>
<organism>
    <name type="scientific">Neisseria meningitidis serogroup C (strain 053442)</name>
    <dbReference type="NCBI Taxonomy" id="374833"/>
    <lineage>
        <taxon>Bacteria</taxon>
        <taxon>Pseudomonadati</taxon>
        <taxon>Pseudomonadota</taxon>
        <taxon>Betaproteobacteria</taxon>
        <taxon>Neisseriales</taxon>
        <taxon>Neisseriaceae</taxon>
        <taxon>Neisseria</taxon>
    </lineage>
</organism>
<comment type="function">
    <text evidence="1">NQR complex catalyzes the reduction of ubiquinone-1 to ubiquinol by two successive reactions, coupled with the transport of Na(+) ions from the cytoplasm to the periplasm. NqrA to NqrE are probably involved in the second step, the conversion of ubisemiquinone to ubiquinol.</text>
</comment>
<comment type="catalytic activity">
    <reaction evidence="1">
        <text>a ubiquinone + n Na(+)(in) + NADH + H(+) = a ubiquinol + n Na(+)(out) + NAD(+)</text>
        <dbReference type="Rhea" id="RHEA:47748"/>
        <dbReference type="Rhea" id="RHEA-COMP:9565"/>
        <dbReference type="Rhea" id="RHEA-COMP:9566"/>
        <dbReference type="ChEBI" id="CHEBI:15378"/>
        <dbReference type="ChEBI" id="CHEBI:16389"/>
        <dbReference type="ChEBI" id="CHEBI:17976"/>
        <dbReference type="ChEBI" id="CHEBI:29101"/>
        <dbReference type="ChEBI" id="CHEBI:57540"/>
        <dbReference type="ChEBI" id="CHEBI:57945"/>
        <dbReference type="EC" id="7.2.1.1"/>
    </reaction>
</comment>
<comment type="subunit">
    <text evidence="1">Composed of six subunits; NqrA, NqrB, NqrC, NqrD, NqrE and NqrF.</text>
</comment>
<comment type="subcellular location">
    <subcellularLocation>
        <location evidence="1">Cell inner membrane</location>
        <topology evidence="1">Multi-pass membrane protein</topology>
    </subcellularLocation>
</comment>
<comment type="similarity">
    <text evidence="1">Belongs to the NqrDE/RnfAE family.</text>
</comment>
<dbReference type="EC" id="7.2.1.1" evidence="1"/>
<dbReference type="EMBL" id="CP000381">
    <property type="protein sequence ID" value="ABX72711.1"/>
    <property type="molecule type" value="Genomic_DNA"/>
</dbReference>
<dbReference type="RefSeq" id="WP_002214363.1">
    <property type="nucleotide sequence ID" value="NC_010120.1"/>
</dbReference>
<dbReference type="SMR" id="A9M2A7"/>
<dbReference type="KEGG" id="nmn:NMCC_0511"/>
<dbReference type="HOGENOM" id="CLU_095255_0_0_4"/>
<dbReference type="Proteomes" id="UP000001177">
    <property type="component" value="Chromosome"/>
</dbReference>
<dbReference type="GO" id="GO:0009276">
    <property type="term" value="C:Gram-negative-bacterium-type cell wall"/>
    <property type="evidence" value="ECO:0007669"/>
    <property type="project" value="InterPro"/>
</dbReference>
<dbReference type="GO" id="GO:0005886">
    <property type="term" value="C:plasma membrane"/>
    <property type="evidence" value="ECO:0007669"/>
    <property type="project" value="UniProtKB-SubCell"/>
</dbReference>
<dbReference type="GO" id="GO:0016655">
    <property type="term" value="F:oxidoreductase activity, acting on NAD(P)H, quinone or similar compound as acceptor"/>
    <property type="evidence" value="ECO:0007669"/>
    <property type="project" value="UniProtKB-UniRule"/>
</dbReference>
<dbReference type="GO" id="GO:0022904">
    <property type="term" value="P:respiratory electron transport chain"/>
    <property type="evidence" value="ECO:0007669"/>
    <property type="project" value="InterPro"/>
</dbReference>
<dbReference type="GO" id="GO:0006814">
    <property type="term" value="P:sodium ion transport"/>
    <property type="evidence" value="ECO:0007669"/>
    <property type="project" value="UniProtKB-UniRule"/>
</dbReference>
<dbReference type="HAMAP" id="MF_00429">
    <property type="entry name" value="NqrE"/>
    <property type="match status" value="1"/>
</dbReference>
<dbReference type="InterPro" id="IPR003667">
    <property type="entry name" value="NqrDE/RnfAE"/>
</dbReference>
<dbReference type="InterPro" id="IPR050133">
    <property type="entry name" value="NqrDE/RnfAE_oxidrdctase"/>
</dbReference>
<dbReference type="InterPro" id="IPR010967">
    <property type="entry name" value="NqrE"/>
</dbReference>
<dbReference type="NCBIfam" id="TIGR01940">
    <property type="entry name" value="nqrE"/>
    <property type="match status" value="1"/>
</dbReference>
<dbReference type="PANTHER" id="PTHR30335">
    <property type="entry name" value="INTEGRAL MEMBRANE PROTEIN OF SOXR-REDUCING COMPLEX"/>
    <property type="match status" value="1"/>
</dbReference>
<dbReference type="PANTHER" id="PTHR30335:SF1">
    <property type="entry name" value="NA(+)-TRANSLOCATING NADH-QUINONE REDUCTASE SUBUNIT E"/>
    <property type="match status" value="1"/>
</dbReference>
<dbReference type="Pfam" id="PF02508">
    <property type="entry name" value="Rnf-Nqr"/>
    <property type="match status" value="1"/>
</dbReference>
<dbReference type="PIRSF" id="PIRSF006102">
    <property type="entry name" value="NQR_DE"/>
    <property type="match status" value="1"/>
</dbReference>